<proteinExistence type="inferred from homology"/>
<feature type="chain" id="PRO_1000066658" description="Acyl carrier protein">
    <location>
        <begin position="1"/>
        <end position="80"/>
    </location>
</feature>
<feature type="domain" description="Carrier" evidence="2">
    <location>
        <begin position="4"/>
        <end position="79"/>
    </location>
</feature>
<feature type="modified residue" description="O-(pantetheine 4'-phosphoryl)serine" evidence="2">
    <location>
        <position position="39"/>
    </location>
</feature>
<evidence type="ECO:0000255" key="1">
    <source>
        <dbReference type="HAMAP-Rule" id="MF_01217"/>
    </source>
</evidence>
<evidence type="ECO:0000255" key="2">
    <source>
        <dbReference type="PROSITE-ProRule" id="PRU00258"/>
    </source>
</evidence>
<protein>
    <recommendedName>
        <fullName evidence="1">Acyl carrier protein</fullName>
        <shortName evidence="1">ACP</shortName>
    </recommendedName>
</protein>
<dbReference type="EMBL" id="CP000095">
    <property type="protein sequence ID" value="AAZ58675.1"/>
    <property type="molecule type" value="Genomic_DNA"/>
</dbReference>
<dbReference type="RefSeq" id="WP_011295529.1">
    <property type="nucleotide sequence ID" value="NC_007335.2"/>
</dbReference>
<dbReference type="SMR" id="Q46IK3"/>
<dbReference type="STRING" id="59920.PMN2A_1185"/>
<dbReference type="KEGG" id="pmn:PMN2A_1185"/>
<dbReference type="HOGENOM" id="CLU_108696_5_1_3"/>
<dbReference type="OrthoDB" id="9804551at2"/>
<dbReference type="PhylomeDB" id="Q46IK3"/>
<dbReference type="UniPathway" id="UPA00094"/>
<dbReference type="Proteomes" id="UP000002535">
    <property type="component" value="Chromosome"/>
</dbReference>
<dbReference type="GO" id="GO:0005829">
    <property type="term" value="C:cytosol"/>
    <property type="evidence" value="ECO:0007669"/>
    <property type="project" value="TreeGrafter"/>
</dbReference>
<dbReference type="GO" id="GO:0016020">
    <property type="term" value="C:membrane"/>
    <property type="evidence" value="ECO:0007669"/>
    <property type="project" value="GOC"/>
</dbReference>
<dbReference type="GO" id="GO:0000035">
    <property type="term" value="F:acyl binding"/>
    <property type="evidence" value="ECO:0007669"/>
    <property type="project" value="TreeGrafter"/>
</dbReference>
<dbReference type="GO" id="GO:0000036">
    <property type="term" value="F:acyl carrier activity"/>
    <property type="evidence" value="ECO:0007669"/>
    <property type="project" value="UniProtKB-UniRule"/>
</dbReference>
<dbReference type="GO" id="GO:0031177">
    <property type="term" value="F:phosphopantetheine binding"/>
    <property type="evidence" value="ECO:0007669"/>
    <property type="project" value="InterPro"/>
</dbReference>
<dbReference type="GO" id="GO:0009245">
    <property type="term" value="P:lipid A biosynthetic process"/>
    <property type="evidence" value="ECO:0007669"/>
    <property type="project" value="TreeGrafter"/>
</dbReference>
<dbReference type="FunFam" id="1.10.1200.10:FF:000001">
    <property type="entry name" value="Acyl carrier protein"/>
    <property type="match status" value="1"/>
</dbReference>
<dbReference type="Gene3D" id="1.10.1200.10">
    <property type="entry name" value="ACP-like"/>
    <property type="match status" value="1"/>
</dbReference>
<dbReference type="HAMAP" id="MF_01217">
    <property type="entry name" value="Acyl_carrier"/>
    <property type="match status" value="1"/>
</dbReference>
<dbReference type="InterPro" id="IPR003231">
    <property type="entry name" value="ACP"/>
</dbReference>
<dbReference type="InterPro" id="IPR036736">
    <property type="entry name" value="ACP-like_sf"/>
</dbReference>
<dbReference type="InterPro" id="IPR020806">
    <property type="entry name" value="PKS_PP-bd"/>
</dbReference>
<dbReference type="InterPro" id="IPR009081">
    <property type="entry name" value="PP-bd_ACP"/>
</dbReference>
<dbReference type="InterPro" id="IPR006162">
    <property type="entry name" value="Ppantetheine_attach_site"/>
</dbReference>
<dbReference type="NCBIfam" id="TIGR00517">
    <property type="entry name" value="acyl_carrier"/>
    <property type="match status" value="1"/>
</dbReference>
<dbReference type="NCBIfam" id="NF002148">
    <property type="entry name" value="PRK00982.1-2"/>
    <property type="match status" value="1"/>
</dbReference>
<dbReference type="NCBIfam" id="NF002149">
    <property type="entry name" value="PRK00982.1-3"/>
    <property type="match status" value="1"/>
</dbReference>
<dbReference type="NCBIfam" id="NF002150">
    <property type="entry name" value="PRK00982.1-4"/>
    <property type="match status" value="1"/>
</dbReference>
<dbReference type="NCBIfam" id="NF002151">
    <property type="entry name" value="PRK00982.1-5"/>
    <property type="match status" value="1"/>
</dbReference>
<dbReference type="NCBIfam" id="NF009104">
    <property type="entry name" value="PRK12449.1"/>
    <property type="match status" value="1"/>
</dbReference>
<dbReference type="PANTHER" id="PTHR20863">
    <property type="entry name" value="ACYL CARRIER PROTEIN"/>
    <property type="match status" value="1"/>
</dbReference>
<dbReference type="PANTHER" id="PTHR20863:SF76">
    <property type="entry name" value="CARRIER DOMAIN-CONTAINING PROTEIN"/>
    <property type="match status" value="1"/>
</dbReference>
<dbReference type="Pfam" id="PF00550">
    <property type="entry name" value="PP-binding"/>
    <property type="match status" value="1"/>
</dbReference>
<dbReference type="SMART" id="SM00823">
    <property type="entry name" value="PKS_PP"/>
    <property type="match status" value="1"/>
</dbReference>
<dbReference type="SUPFAM" id="SSF47336">
    <property type="entry name" value="ACP-like"/>
    <property type="match status" value="1"/>
</dbReference>
<dbReference type="PROSITE" id="PS50075">
    <property type="entry name" value="CARRIER"/>
    <property type="match status" value="1"/>
</dbReference>
<dbReference type="PROSITE" id="PS00012">
    <property type="entry name" value="PHOSPHOPANTETHEINE"/>
    <property type="match status" value="1"/>
</dbReference>
<comment type="function">
    <text evidence="1">Carrier of the growing fatty acid chain in fatty acid biosynthesis.</text>
</comment>
<comment type="pathway">
    <text evidence="1">Lipid metabolism; fatty acid biosynthesis.</text>
</comment>
<comment type="subcellular location">
    <subcellularLocation>
        <location evidence="1">Cytoplasm</location>
    </subcellularLocation>
</comment>
<comment type="PTM">
    <text evidence="1">4'-phosphopantetheine is transferred from CoA to a specific serine of apo-ACP by AcpS. This modification is essential for activity because fatty acids are bound in thioester linkage to the sulfhydryl of the prosthetic group.</text>
</comment>
<comment type="similarity">
    <text evidence="1">Belongs to the acyl carrier protein (ACP) family.</text>
</comment>
<reference key="1">
    <citation type="journal article" date="2007" name="PLoS Genet.">
        <title>Patterns and implications of gene gain and loss in the evolution of Prochlorococcus.</title>
        <authorList>
            <person name="Kettler G.C."/>
            <person name="Martiny A.C."/>
            <person name="Huang K."/>
            <person name="Zucker J."/>
            <person name="Coleman M.L."/>
            <person name="Rodrigue S."/>
            <person name="Chen F."/>
            <person name="Lapidus A."/>
            <person name="Ferriera S."/>
            <person name="Johnson J."/>
            <person name="Steglich C."/>
            <person name="Church G.M."/>
            <person name="Richardson P."/>
            <person name="Chisholm S.W."/>
        </authorList>
    </citation>
    <scope>NUCLEOTIDE SEQUENCE [LARGE SCALE GENOMIC DNA]</scope>
    <source>
        <strain>NATL2A</strain>
    </source>
</reference>
<organism>
    <name type="scientific">Prochlorococcus marinus (strain NATL2A)</name>
    <dbReference type="NCBI Taxonomy" id="59920"/>
    <lineage>
        <taxon>Bacteria</taxon>
        <taxon>Bacillati</taxon>
        <taxon>Cyanobacteriota</taxon>
        <taxon>Cyanophyceae</taxon>
        <taxon>Synechococcales</taxon>
        <taxon>Prochlorococcaceae</taxon>
        <taxon>Prochlorococcus</taxon>
    </lineage>
</organism>
<keyword id="KW-0963">Cytoplasm</keyword>
<keyword id="KW-0275">Fatty acid biosynthesis</keyword>
<keyword id="KW-0276">Fatty acid metabolism</keyword>
<keyword id="KW-0444">Lipid biosynthesis</keyword>
<keyword id="KW-0443">Lipid metabolism</keyword>
<keyword id="KW-0596">Phosphopantetheine</keyword>
<keyword id="KW-0597">Phosphoprotein</keyword>
<keyword id="KW-1185">Reference proteome</keyword>
<gene>
    <name evidence="1" type="primary">acpP</name>
    <name type="ordered locus">PMN2A_1185</name>
</gene>
<name>ACP_PROMT</name>
<sequence>MSQEAILEKVRSIVAEQLSVEAGEVKPDSNFQNDLGADSLDTVELVMALEEAFDIEIPDEAAEGIATVGDAVKYIEEKQS</sequence>
<accession>Q46IK3</accession>